<name>RL11_BURP0</name>
<keyword id="KW-0488">Methylation</keyword>
<keyword id="KW-0687">Ribonucleoprotein</keyword>
<keyword id="KW-0689">Ribosomal protein</keyword>
<keyword id="KW-0694">RNA-binding</keyword>
<keyword id="KW-0699">rRNA-binding</keyword>
<reference key="1">
    <citation type="journal article" date="2010" name="Genome Biol. Evol.">
        <title>Continuing evolution of Burkholderia mallei through genome reduction and large-scale rearrangements.</title>
        <authorList>
            <person name="Losada L."/>
            <person name="Ronning C.M."/>
            <person name="DeShazer D."/>
            <person name="Woods D."/>
            <person name="Fedorova N."/>
            <person name="Kim H.S."/>
            <person name="Shabalina S.A."/>
            <person name="Pearson T.R."/>
            <person name="Brinkac L."/>
            <person name="Tan P."/>
            <person name="Nandi T."/>
            <person name="Crabtree J."/>
            <person name="Badger J."/>
            <person name="Beckstrom-Sternberg S."/>
            <person name="Saqib M."/>
            <person name="Schutzer S.E."/>
            <person name="Keim P."/>
            <person name="Nierman W.C."/>
        </authorList>
    </citation>
    <scope>NUCLEOTIDE SEQUENCE [LARGE SCALE GENOMIC DNA]</scope>
    <source>
        <strain>1106a</strain>
    </source>
</reference>
<feature type="chain" id="PRO_1000046154" description="Large ribosomal subunit protein uL11">
    <location>
        <begin position="1"/>
        <end position="143"/>
    </location>
</feature>
<comment type="function">
    <text evidence="1">Forms part of the ribosomal stalk which helps the ribosome interact with GTP-bound translation factors.</text>
</comment>
<comment type="subunit">
    <text evidence="1">Part of the ribosomal stalk of the 50S ribosomal subunit. Interacts with L10 and the large rRNA to form the base of the stalk. L10 forms an elongated spine to which L12 dimers bind in a sequential fashion forming a multimeric L10(L12)X complex.</text>
</comment>
<comment type="PTM">
    <text evidence="1">One or more lysine residues are methylated.</text>
</comment>
<comment type="similarity">
    <text evidence="1">Belongs to the universal ribosomal protein uL11 family.</text>
</comment>
<dbReference type="EMBL" id="CP000572">
    <property type="protein sequence ID" value="ABN90647.1"/>
    <property type="molecule type" value="Genomic_DNA"/>
</dbReference>
<dbReference type="RefSeq" id="WP_004198368.1">
    <property type="nucleotide sequence ID" value="NC_009076.1"/>
</dbReference>
<dbReference type="SMR" id="A3P0C9"/>
<dbReference type="GeneID" id="93061845"/>
<dbReference type="KEGG" id="bpl:BURPS1106A_3820"/>
<dbReference type="HOGENOM" id="CLU_074237_2_0_4"/>
<dbReference type="Proteomes" id="UP000006738">
    <property type="component" value="Chromosome I"/>
</dbReference>
<dbReference type="GO" id="GO:0022625">
    <property type="term" value="C:cytosolic large ribosomal subunit"/>
    <property type="evidence" value="ECO:0007669"/>
    <property type="project" value="TreeGrafter"/>
</dbReference>
<dbReference type="GO" id="GO:0070180">
    <property type="term" value="F:large ribosomal subunit rRNA binding"/>
    <property type="evidence" value="ECO:0007669"/>
    <property type="project" value="UniProtKB-UniRule"/>
</dbReference>
<dbReference type="GO" id="GO:0003735">
    <property type="term" value="F:structural constituent of ribosome"/>
    <property type="evidence" value="ECO:0007669"/>
    <property type="project" value="InterPro"/>
</dbReference>
<dbReference type="GO" id="GO:0006412">
    <property type="term" value="P:translation"/>
    <property type="evidence" value="ECO:0007669"/>
    <property type="project" value="UniProtKB-UniRule"/>
</dbReference>
<dbReference type="CDD" id="cd00349">
    <property type="entry name" value="Ribosomal_L11"/>
    <property type="match status" value="1"/>
</dbReference>
<dbReference type="FunFam" id="1.10.10.250:FF:000001">
    <property type="entry name" value="50S ribosomal protein L11"/>
    <property type="match status" value="1"/>
</dbReference>
<dbReference type="FunFam" id="3.30.1550.10:FF:000001">
    <property type="entry name" value="50S ribosomal protein L11"/>
    <property type="match status" value="1"/>
</dbReference>
<dbReference type="Gene3D" id="1.10.10.250">
    <property type="entry name" value="Ribosomal protein L11, C-terminal domain"/>
    <property type="match status" value="1"/>
</dbReference>
<dbReference type="Gene3D" id="3.30.1550.10">
    <property type="entry name" value="Ribosomal protein L11/L12, N-terminal domain"/>
    <property type="match status" value="1"/>
</dbReference>
<dbReference type="HAMAP" id="MF_00736">
    <property type="entry name" value="Ribosomal_uL11"/>
    <property type="match status" value="1"/>
</dbReference>
<dbReference type="InterPro" id="IPR000911">
    <property type="entry name" value="Ribosomal_uL11"/>
</dbReference>
<dbReference type="InterPro" id="IPR006519">
    <property type="entry name" value="Ribosomal_uL11_bac-typ"/>
</dbReference>
<dbReference type="InterPro" id="IPR020783">
    <property type="entry name" value="Ribosomal_uL11_C"/>
</dbReference>
<dbReference type="InterPro" id="IPR036769">
    <property type="entry name" value="Ribosomal_uL11_C_sf"/>
</dbReference>
<dbReference type="InterPro" id="IPR020785">
    <property type="entry name" value="Ribosomal_uL11_CS"/>
</dbReference>
<dbReference type="InterPro" id="IPR020784">
    <property type="entry name" value="Ribosomal_uL11_N"/>
</dbReference>
<dbReference type="InterPro" id="IPR036796">
    <property type="entry name" value="Ribosomal_uL11_N_sf"/>
</dbReference>
<dbReference type="NCBIfam" id="TIGR01632">
    <property type="entry name" value="L11_bact"/>
    <property type="match status" value="1"/>
</dbReference>
<dbReference type="PANTHER" id="PTHR11661">
    <property type="entry name" value="60S RIBOSOMAL PROTEIN L12"/>
    <property type="match status" value="1"/>
</dbReference>
<dbReference type="PANTHER" id="PTHR11661:SF1">
    <property type="entry name" value="LARGE RIBOSOMAL SUBUNIT PROTEIN UL11M"/>
    <property type="match status" value="1"/>
</dbReference>
<dbReference type="Pfam" id="PF00298">
    <property type="entry name" value="Ribosomal_L11"/>
    <property type="match status" value="1"/>
</dbReference>
<dbReference type="Pfam" id="PF03946">
    <property type="entry name" value="Ribosomal_L11_N"/>
    <property type="match status" value="1"/>
</dbReference>
<dbReference type="SMART" id="SM00649">
    <property type="entry name" value="RL11"/>
    <property type="match status" value="1"/>
</dbReference>
<dbReference type="SUPFAM" id="SSF54747">
    <property type="entry name" value="Ribosomal L11/L12e N-terminal domain"/>
    <property type="match status" value="1"/>
</dbReference>
<dbReference type="SUPFAM" id="SSF46906">
    <property type="entry name" value="Ribosomal protein L11, C-terminal domain"/>
    <property type="match status" value="1"/>
</dbReference>
<dbReference type="PROSITE" id="PS00359">
    <property type="entry name" value="RIBOSOMAL_L11"/>
    <property type="match status" value="1"/>
</dbReference>
<protein>
    <recommendedName>
        <fullName evidence="1">Large ribosomal subunit protein uL11</fullName>
    </recommendedName>
    <alternativeName>
        <fullName evidence="2">50S ribosomal protein L11</fullName>
    </alternativeName>
</protein>
<sequence length="143" mass="14959">MAKKIVGFIKLQIPAGKANPSPPVGPALGQRGLNIMEFCKAFNAQTQGMEPGLPVPVVITAYADKSFTFVMKTPPATVLIKKAAKVDKGSSKPHTDKVGKITRAQAEEIAKTKMPDLTAADLDAAVRTIAGSARSMGITVEGV</sequence>
<proteinExistence type="inferred from homology"/>
<accession>A3P0C9</accession>
<organism>
    <name type="scientific">Burkholderia pseudomallei (strain 1106a)</name>
    <dbReference type="NCBI Taxonomy" id="357348"/>
    <lineage>
        <taxon>Bacteria</taxon>
        <taxon>Pseudomonadati</taxon>
        <taxon>Pseudomonadota</taxon>
        <taxon>Betaproteobacteria</taxon>
        <taxon>Burkholderiales</taxon>
        <taxon>Burkholderiaceae</taxon>
        <taxon>Burkholderia</taxon>
        <taxon>pseudomallei group</taxon>
    </lineage>
</organism>
<evidence type="ECO:0000255" key="1">
    <source>
        <dbReference type="HAMAP-Rule" id="MF_00736"/>
    </source>
</evidence>
<evidence type="ECO:0000305" key="2"/>
<gene>
    <name evidence="1" type="primary">rplK</name>
    <name type="ordered locus">BURPS1106A_3820</name>
</gene>